<keyword id="KW-0067">ATP-binding</keyword>
<keyword id="KW-0119">Carbohydrate metabolism</keyword>
<keyword id="KW-0418">Kinase</keyword>
<keyword id="KW-0460">Magnesium</keyword>
<keyword id="KW-0479">Metal-binding</keyword>
<keyword id="KW-0511">Multifunctional enzyme</keyword>
<keyword id="KW-0547">Nucleotide-binding</keyword>
<keyword id="KW-0723">Serine/threonine-protein kinase</keyword>
<keyword id="KW-0808">Transferase</keyword>
<protein>
    <recommendedName>
        <fullName evidence="1">HPr kinase/phosphorylase</fullName>
        <shortName evidence="1">HPrK/P</shortName>
        <ecNumber evidence="1">2.7.11.-</ecNumber>
        <ecNumber evidence="1">2.7.4.-</ecNumber>
    </recommendedName>
    <alternativeName>
        <fullName evidence="1">HPr(Ser) kinase/phosphorylase</fullName>
    </alternativeName>
</protein>
<sequence length="320" mass="35488">MPNNVTVQELVDKVRLKVLQGEDYLQRKITTSDISRPALEFAGYFKHYPAARIQLLGITETSFAKDLTHEQREEYMTKMCMPQTPCFVISTNLPIPKELKKAAEDAKIPILGTHLTSSQILSNMTSYLLERLAPRKSLHGVLVDISGVGVLITGDSGVGKSETALELVRRGHRLIADDRVEVYARDEQTLVGTAPQILKHLMEIRGIGIIDVSTLYGTGAIMPSDQISLIVHLETWTPDVQFDRLGDRGDTQTIQGVIVPKVSVPVKTGRNLAIIIESAAMNYRAETMGYDATETFDRNLNQLIKQNSERDSKNNKGSAN</sequence>
<reference key="1">
    <citation type="journal article" date="2008" name="DNA Res.">
        <title>Comparative genome analysis of Lactobacillus reuteri and Lactobacillus fermentum reveal a genomic island for reuterin and cobalamin production.</title>
        <authorList>
            <person name="Morita H."/>
            <person name="Toh H."/>
            <person name="Fukuda S."/>
            <person name="Horikawa H."/>
            <person name="Oshima K."/>
            <person name="Suzuki T."/>
            <person name="Murakami M."/>
            <person name="Hisamatsu S."/>
            <person name="Kato Y."/>
            <person name="Takizawa T."/>
            <person name="Fukuoka H."/>
            <person name="Yoshimura T."/>
            <person name="Itoh K."/>
            <person name="O'Sullivan D.J."/>
            <person name="McKay L.L."/>
            <person name="Ohno H."/>
            <person name="Kikuchi J."/>
            <person name="Masaoka T."/>
            <person name="Hattori M."/>
        </authorList>
    </citation>
    <scope>NUCLEOTIDE SEQUENCE [LARGE SCALE GENOMIC DNA]</scope>
    <source>
        <strain>JCM 1112</strain>
    </source>
</reference>
<gene>
    <name evidence="1" type="primary">hprK</name>
    <name type="ordered locus">LAR_0358</name>
</gene>
<feature type="chain" id="PRO_1000139902" description="HPr kinase/phosphorylase">
    <location>
        <begin position="1"/>
        <end position="320"/>
    </location>
</feature>
<feature type="region of interest" description="Important for the catalytic mechanism of both phosphorylation and dephosphorylation" evidence="1">
    <location>
        <begin position="202"/>
        <end position="211"/>
    </location>
</feature>
<feature type="region of interest" description="Important for the catalytic mechanism of dephosphorylation" evidence="1">
    <location>
        <begin position="265"/>
        <end position="270"/>
    </location>
</feature>
<feature type="active site" evidence="1">
    <location>
        <position position="139"/>
    </location>
</feature>
<feature type="active site" evidence="1">
    <location>
        <position position="160"/>
    </location>
</feature>
<feature type="active site" description="Proton acceptor; for phosphorylation activity. Proton donor; for dephosphorylation activity" evidence="1">
    <location>
        <position position="178"/>
    </location>
</feature>
<feature type="active site" evidence="1">
    <location>
        <position position="244"/>
    </location>
</feature>
<feature type="binding site" evidence="1">
    <location>
        <begin position="154"/>
        <end position="161"/>
    </location>
    <ligand>
        <name>ATP</name>
        <dbReference type="ChEBI" id="CHEBI:30616"/>
    </ligand>
</feature>
<feature type="binding site" evidence="1">
    <location>
        <position position="161"/>
    </location>
    <ligand>
        <name>Mg(2+)</name>
        <dbReference type="ChEBI" id="CHEBI:18420"/>
    </ligand>
</feature>
<feature type="binding site" evidence="1">
    <location>
        <position position="203"/>
    </location>
    <ligand>
        <name>Mg(2+)</name>
        <dbReference type="ChEBI" id="CHEBI:18420"/>
    </ligand>
</feature>
<proteinExistence type="inferred from homology"/>
<organism>
    <name type="scientific">Limosilactobacillus reuteri subsp. reuteri (strain JCM 1112)</name>
    <name type="common">Lactobacillus reuteri</name>
    <dbReference type="NCBI Taxonomy" id="557433"/>
    <lineage>
        <taxon>Bacteria</taxon>
        <taxon>Bacillati</taxon>
        <taxon>Bacillota</taxon>
        <taxon>Bacilli</taxon>
        <taxon>Lactobacillales</taxon>
        <taxon>Lactobacillaceae</taxon>
        <taxon>Limosilactobacillus</taxon>
    </lineage>
</organism>
<accession>B2G5Z2</accession>
<evidence type="ECO:0000255" key="1">
    <source>
        <dbReference type="HAMAP-Rule" id="MF_01249"/>
    </source>
</evidence>
<dbReference type="EC" id="2.7.11.-" evidence="1"/>
<dbReference type="EC" id="2.7.4.-" evidence="1"/>
<dbReference type="EMBL" id="AP007281">
    <property type="protein sequence ID" value="BAG24874.1"/>
    <property type="molecule type" value="Genomic_DNA"/>
</dbReference>
<dbReference type="RefSeq" id="WP_003666394.1">
    <property type="nucleotide sequence ID" value="NC_010609.1"/>
</dbReference>
<dbReference type="SMR" id="B2G5Z2"/>
<dbReference type="GeneID" id="77190173"/>
<dbReference type="KEGG" id="lrf:LAR_0358"/>
<dbReference type="HOGENOM" id="CLU_052030_0_1_9"/>
<dbReference type="GO" id="GO:0005524">
    <property type="term" value="F:ATP binding"/>
    <property type="evidence" value="ECO:0007669"/>
    <property type="project" value="UniProtKB-UniRule"/>
</dbReference>
<dbReference type="GO" id="GO:0000287">
    <property type="term" value="F:magnesium ion binding"/>
    <property type="evidence" value="ECO:0007669"/>
    <property type="project" value="UniProtKB-UniRule"/>
</dbReference>
<dbReference type="GO" id="GO:0000155">
    <property type="term" value="F:phosphorelay sensor kinase activity"/>
    <property type="evidence" value="ECO:0007669"/>
    <property type="project" value="InterPro"/>
</dbReference>
<dbReference type="GO" id="GO:0004674">
    <property type="term" value="F:protein serine/threonine kinase activity"/>
    <property type="evidence" value="ECO:0007669"/>
    <property type="project" value="UniProtKB-KW"/>
</dbReference>
<dbReference type="GO" id="GO:0004712">
    <property type="term" value="F:protein serine/threonine/tyrosine kinase activity"/>
    <property type="evidence" value="ECO:0007669"/>
    <property type="project" value="UniProtKB-UniRule"/>
</dbReference>
<dbReference type="GO" id="GO:0006109">
    <property type="term" value="P:regulation of carbohydrate metabolic process"/>
    <property type="evidence" value="ECO:0007669"/>
    <property type="project" value="UniProtKB-UniRule"/>
</dbReference>
<dbReference type="CDD" id="cd01918">
    <property type="entry name" value="HprK_C"/>
    <property type="match status" value="1"/>
</dbReference>
<dbReference type="FunFam" id="3.40.50.300:FF:000174">
    <property type="entry name" value="HPr kinase/phosphorylase"/>
    <property type="match status" value="1"/>
</dbReference>
<dbReference type="Gene3D" id="3.40.1390.20">
    <property type="entry name" value="HprK N-terminal domain-like"/>
    <property type="match status" value="1"/>
</dbReference>
<dbReference type="Gene3D" id="3.40.50.300">
    <property type="entry name" value="P-loop containing nucleotide triphosphate hydrolases"/>
    <property type="match status" value="1"/>
</dbReference>
<dbReference type="HAMAP" id="MF_01249">
    <property type="entry name" value="HPr_kinase"/>
    <property type="match status" value="1"/>
</dbReference>
<dbReference type="InterPro" id="IPR003755">
    <property type="entry name" value="HPr(Ser)_kin/Pase"/>
</dbReference>
<dbReference type="InterPro" id="IPR011104">
    <property type="entry name" value="Hpr_kin/Pase_C"/>
</dbReference>
<dbReference type="InterPro" id="IPR011126">
    <property type="entry name" value="Hpr_kin/Pase_Hpr_N"/>
</dbReference>
<dbReference type="InterPro" id="IPR027417">
    <property type="entry name" value="P-loop_NTPase"/>
</dbReference>
<dbReference type="InterPro" id="IPR028979">
    <property type="entry name" value="Ser_kin/Pase_Hpr-like_N_sf"/>
</dbReference>
<dbReference type="NCBIfam" id="TIGR00679">
    <property type="entry name" value="hpr-ser"/>
    <property type="match status" value="1"/>
</dbReference>
<dbReference type="PANTHER" id="PTHR30305:SF1">
    <property type="entry name" value="HPR KINASE_PHOSPHORYLASE"/>
    <property type="match status" value="1"/>
</dbReference>
<dbReference type="PANTHER" id="PTHR30305">
    <property type="entry name" value="PROTEIN YJDM-RELATED"/>
    <property type="match status" value="1"/>
</dbReference>
<dbReference type="Pfam" id="PF07475">
    <property type="entry name" value="Hpr_kinase_C"/>
    <property type="match status" value="1"/>
</dbReference>
<dbReference type="Pfam" id="PF02603">
    <property type="entry name" value="Hpr_kinase_N"/>
    <property type="match status" value="1"/>
</dbReference>
<dbReference type="SUPFAM" id="SSF75138">
    <property type="entry name" value="HprK N-terminal domain-like"/>
    <property type="match status" value="1"/>
</dbReference>
<dbReference type="SUPFAM" id="SSF53795">
    <property type="entry name" value="PEP carboxykinase-like"/>
    <property type="match status" value="1"/>
</dbReference>
<name>HPRK_LIMRJ</name>
<comment type="function">
    <text evidence="1">Catalyzes the ATP- as well as the pyrophosphate-dependent phosphorylation of a specific serine residue in HPr, a phosphocarrier protein of the phosphoenolpyruvate-dependent sugar phosphotransferase system (PTS). HprK/P also catalyzes the pyrophosphate-producing, inorganic phosphate-dependent dephosphorylation (phosphorolysis) of seryl-phosphorylated HPr (P-Ser-HPr). The two antagonistic activities of HprK/P are regulated by several intracellular metabolites, which change their concentration in response to the absence or presence of rapidly metabolisable carbon sources (glucose, fructose, etc.) in the growth medium. Therefore, by controlling the phosphorylation state of HPr, HPrK/P is a sensor enzyme that plays a major role in the regulation of carbon metabolism and sugar transport: it mediates carbon catabolite repression (CCR), and regulates PTS-catalyzed carbohydrate uptake and inducer exclusion.</text>
</comment>
<comment type="catalytic activity">
    <reaction evidence="1">
        <text>[HPr protein]-L-serine + ATP = [HPr protein]-O-phospho-L-serine + ADP + H(+)</text>
        <dbReference type="Rhea" id="RHEA:46600"/>
        <dbReference type="Rhea" id="RHEA-COMP:11602"/>
        <dbReference type="Rhea" id="RHEA-COMP:11603"/>
        <dbReference type="ChEBI" id="CHEBI:15378"/>
        <dbReference type="ChEBI" id="CHEBI:29999"/>
        <dbReference type="ChEBI" id="CHEBI:30616"/>
        <dbReference type="ChEBI" id="CHEBI:83421"/>
        <dbReference type="ChEBI" id="CHEBI:456216"/>
    </reaction>
</comment>
<comment type="catalytic activity">
    <reaction evidence="1">
        <text>[HPr protein]-O-phospho-L-serine + phosphate + H(+) = [HPr protein]-L-serine + diphosphate</text>
        <dbReference type="Rhea" id="RHEA:46604"/>
        <dbReference type="Rhea" id="RHEA-COMP:11602"/>
        <dbReference type="Rhea" id="RHEA-COMP:11603"/>
        <dbReference type="ChEBI" id="CHEBI:15378"/>
        <dbReference type="ChEBI" id="CHEBI:29999"/>
        <dbReference type="ChEBI" id="CHEBI:33019"/>
        <dbReference type="ChEBI" id="CHEBI:43474"/>
        <dbReference type="ChEBI" id="CHEBI:83421"/>
    </reaction>
</comment>
<comment type="cofactor">
    <cofactor evidence="1">
        <name>Mg(2+)</name>
        <dbReference type="ChEBI" id="CHEBI:18420"/>
    </cofactor>
</comment>
<comment type="subunit">
    <text evidence="1">Homohexamer.</text>
</comment>
<comment type="domain">
    <text evidence="1">The Walker A ATP-binding motif also binds Pi and PPi.</text>
</comment>
<comment type="miscellaneous">
    <text evidence="1">Both phosphorylation and phosphorolysis are carried out by the same active site and suggest a common mechanism for both reactions.</text>
</comment>
<comment type="similarity">
    <text evidence="1">Belongs to the HPrK/P family.</text>
</comment>